<protein>
    <recommendedName>
        <fullName>Nitrate/nitrite sensor protein NarX</fullName>
        <ecNumber>2.7.13.3</ecNumber>
    </recommendedName>
</protein>
<comment type="function">
    <text evidence="1">Acts as a sensor for nitrate/nitrite and transduces signal of nitrate availability to the NarL protein and of both nitrate/nitrite to the NarP protein. NarX probably activates NarL and NarP by phosphorylation in the presence of nitrate. NarX also plays a negative role in controlling NarL activity, probably through dephosphorylation in the absence of nitrate (By similarity).</text>
</comment>
<comment type="catalytic activity">
    <reaction>
        <text>ATP + protein L-histidine = ADP + protein N-phospho-L-histidine.</text>
        <dbReference type="EC" id="2.7.13.3"/>
    </reaction>
</comment>
<comment type="subcellular location">
    <subcellularLocation>
        <location evidence="1">Cell inner membrane</location>
        <topology evidence="1">Multi-pass membrane protein</topology>
    </subcellularLocation>
</comment>
<keyword id="KW-0067">ATP-binding</keyword>
<keyword id="KW-0997">Cell inner membrane</keyword>
<keyword id="KW-1003">Cell membrane</keyword>
<keyword id="KW-0418">Kinase</keyword>
<keyword id="KW-0472">Membrane</keyword>
<keyword id="KW-0534">Nitrate assimilation</keyword>
<keyword id="KW-0547">Nucleotide-binding</keyword>
<keyword id="KW-0597">Phosphoprotein</keyword>
<keyword id="KW-1185">Reference proteome</keyword>
<keyword id="KW-0808">Transferase</keyword>
<keyword id="KW-0812">Transmembrane</keyword>
<keyword id="KW-1133">Transmembrane helix</keyword>
<keyword id="KW-0902">Two-component regulatory system</keyword>
<name>NARX_SHIFL</name>
<proteinExistence type="inferred from homology"/>
<feature type="chain" id="PRO_0000074814" description="Nitrate/nitrite sensor protein NarX">
    <location>
        <begin position="1"/>
        <end position="598"/>
    </location>
</feature>
<feature type="topological domain" description="Cytoplasmic" evidence="2">
    <location>
        <begin position="1"/>
        <end position="14"/>
    </location>
</feature>
<feature type="transmembrane region" description="Helical" evidence="2">
    <location>
        <begin position="15"/>
        <end position="37"/>
    </location>
</feature>
<feature type="topological domain" description="Periplasmic" evidence="2">
    <location>
        <begin position="38"/>
        <end position="151"/>
    </location>
</feature>
<feature type="transmembrane region" description="Helical" evidence="2">
    <location>
        <begin position="152"/>
        <end position="174"/>
    </location>
</feature>
<feature type="topological domain" description="Cytoplasmic" evidence="2">
    <location>
        <begin position="175"/>
        <end position="598"/>
    </location>
</feature>
<feature type="domain" description="HAMP" evidence="3">
    <location>
        <begin position="176"/>
        <end position="228"/>
    </location>
</feature>
<feature type="domain" description="Histidine kinase" evidence="4">
    <location>
        <begin position="393"/>
        <end position="587"/>
    </location>
</feature>
<feature type="modified residue" description="Phosphohistidine; by autocatalysis" evidence="4">
    <location>
        <position position="399"/>
    </location>
</feature>
<gene>
    <name type="primary">narX</name>
    <name type="ordered locus">SF1225</name>
    <name type="ordered locus">S1309</name>
</gene>
<evidence type="ECO:0000250" key="1"/>
<evidence type="ECO:0000255" key="2"/>
<evidence type="ECO:0000255" key="3">
    <source>
        <dbReference type="PROSITE-ProRule" id="PRU00102"/>
    </source>
</evidence>
<evidence type="ECO:0000255" key="4">
    <source>
        <dbReference type="PROSITE-ProRule" id="PRU00107"/>
    </source>
</evidence>
<accession>P0AFA4</accession>
<accession>P10956</accession>
<organism>
    <name type="scientific">Shigella flexneri</name>
    <dbReference type="NCBI Taxonomy" id="623"/>
    <lineage>
        <taxon>Bacteria</taxon>
        <taxon>Pseudomonadati</taxon>
        <taxon>Pseudomonadota</taxon>
        <taxon>Gammaproteobacteria</taxon>
        <taxon>Enterobacterales</taxon>
        <taxon>Enterobacteriaceae</taxon>
        <taxon>Shigella</taxon>
    </lineage>
</organism>
<reference key="1">
    <citation type="journal article" date="2002" name="Nucleic Acids Res.">
        <title>Genome sequence of Shigella flexneri 2a: insights into pathogenicity through comparison with genomes of Escherichia coli K12 and O157.</title>
        <authorList>
            <person name="Jin Q."/>
            <person name="Yuan Z."/>
            <person name="Xu J."/>
            <person name="Wang Y."/>
            <person name="Shen Y."/>
            <person name="Lu W."/>
            <person name="Wang J."/>
            <person name="Liu H."/>
            <person name="Yang J."/>
            <person name="Yang F."/>
            <person name="Zhang X."/>
            <person name="Zhang J."/>
            <person name="Yang G."/>
            <person name="Wu H."/>
            <person name="Qu D."/>
            <person name="Dong J."/>
            <person name="Sun L."/>
            <person name="Xue Y."/>
            <person name="Zhao A."/>
            <person name="Gao Y."/>
            <person name="Zhu J."/>
            <person name="Kan B."/>
            <person name="Ding K."/>
            <person name="Chen S."/>
            <person name="Cheng H."/>
            <person name="Yao Z."/>
            <person name="He B."/>
            <person name="Chen R."/>
            <person name="Ma D."/>
            <person name="Qiang B."/>
            <person name="Wen Y."/>
            <person name="Hou Y."/>
            <person name="Yu J."/>
        </authorList>
    </citation>
    <scope>NUCLEOTIDE SEQUENCE [LARGE SCALE GENOMIC DNA]</scope>
    <source>
        <strain>301 / Serotype 2a</strain>
    </source>
</reference>
<reference key="2">
    <citation type="journal article" date="2003" name="Infect. Immun.">
        <title>Complete genome sequence and comparative genomics of Shigella flexneri serotype 2a strain 2457T.</title>
        <authorList>
            <person name="Wei J."/>
            <person name="Goldberg M.B."/>
            <person name="Burland V."/>
            <person name="Venkatesan M.M."/>
            <person name="Deng W."/>
            <person name="Fournier G."/>
            <person name="Mayhew G.F."/>
            <person name="Plunkett G. III"/>
            <person name="Rose D.J."/>
            <person name="Darling A."/>
            <person name="Mau B."/>
            <person name="Perna N.T."/>
            <person name="Payne S.M."/>
            <person name="Runyen-Janecky L.J."/>
            <person name="Zhou S."/>
            <person name="Schwartz D.C."/>
            <person name="Blattner F.R."/>
        </authorList>
    </citation>
    <scope>NUCLEOTIDE SEQUENCE [LARGE SCALE GENOMIC DNA]</scope>
    <source>
        <strain>ATCC 700930 / 2457T / Serotype 2a</strain>
    </source>
</reference>
<sequence length="598" mass="67084">MLKRCLSPLTLVNQVALIVLLSTAIGLAGMAVSGWLVQGVQGSAHAINKAGSLRMQSYRLLAAVPLSEKDKPLIKEMEQTAFSAELTRAAERDGQLAQLQGLQDYWRNELIPALMRAQNRETVSADVSQFVAGLDQLVSGFDRTTEMRIETVVLVHRVMAVFMALLLVFTIIWLRARLLQPWRQLLAMASAVSHRDFTQRANISGRNEMAMLGTALNNMSAELAESYAVLEQRVQEKTAGLEHKNQILSFLWQANRRLHSRAPLCERLSPVLNGLQNLTLLRDIELRVYDTDDEENHQEFTCQPDMTCDDKGCQLCPRGVLPVGDRGTTLKWRLADSHTQYGILLATLPQGRHLSHDQQQLVDTLVEQLTATLALDRHQERQQQLIVMEERATIARELHDSIAQSLSCMKMQVSCLQMQGDALPESSRELLSQIRNELNASWAQLRELLTTFRLQLTEPGLRPALEASCEEYSAKFGFPVKLDYQLPPRLVPSHQAIHLLQIAREALSNALKHSQASEVVVTVAQNDNQVKLTVQDNGCGVPENAIRSNHYGMIIMRDRAQSLRGDCRVRRRESGGTEVVVTFIPEKTFTDVQGDTHE</sequence>
<dbReference type="EC" id="2.7.13.3"/>
<dbReference type="EMBL" id="AE005674">
    <property type="protein sequence ID" value="AAN42838.1"/>
    <property type="molecule type" value="Genomic_DNA"/>
</dbReference>
<dbReference type="EMBL" id="AE014073">
    <property type="protein sequence ID" value="AAP16724.1"/>
    <property type="molecule type" value="Genomic_DNA"/>
</dbReference>
<dbReference type="RefSeq" id="NP_707131.1">
    <property type="nucleotide sequence ID" value="NC_004337.2"/>
</dbReference>
<dbReference type="RefSeq" id="WP_000918073.1">
    <property type="nucleotide sequence ID" value="NZ_WPGW01000029.1"/>
</dbReference>
<dbReference type="SMR" id="P0AFA4"/>
<dbReference type="STRING" id="198214.SF1225"/>
<dbReference type="PaxDb" id="198214-SF1225"/>
<dbReference type="GeneID" id="1024167"/>
<dbReference type="GeneID" id="75203337"/>
<dbReference type="KEGG" id="sfl:SF1225"/>
<dbReference type="KEGG" id="sfx:S1309"/>
<dbReference type="PATRIC" id="fig|198214.7.peg.1443"/>
<dbReference type="HOGENOM" id="CLU_000445_20_10_6"/>
<dbReference type="Proteomes" id="UP000001006">
    <property type="component" value="Chromosome"/>
</dbReference>
<dbReference type="Proteomes" id="UP000002673">
    <property type="component" value="Chromosome"/>
</dbReference>
<dbReference type="GO" id="GO:0005886">
    <property type="term" value="C:plasma membrane"/>
    <property type="evidence" value="ECO:0007669"/>
    <property type="project" value="UniProtKB-SubCell"/>
</dbReference>
<dbReference type="GO" id="GO:0005524">
    <property type="term" value="F:ATP binding"/>
    <property type="evidence" value="ECO:0007669"/>
    <property type="project" value="UniProtKB-KW"/>
</dbReference>
<dbReference type="GO" id="GO:0000155">
    <property type="term" value="F:phosphorelay sensor kinase activity"/>
    <property type="evidence" value="ECO:0007669"/>
    <property type="project" value="InterPro"/>
</dbReference>
<dbReference type="GO" id="GO:0046983">
    <property type="term" value="F:protein dimerization activity"/>
    <property type="evidence" value="ECO:0007669"/>
    <property type="project" value="InterPro"/>
</dbReference>
<dbReference type="GO" id="GO:0042128">
    <property type="term" value="P:nitrate assimilation"/>
    <property type="evidence" value="ECO:0007669"/>
    <property type="project" value="UniProtKB-KW"/>
</dbReference>
<dbReference type="CDD" id="cd06225">
    <property type="entry name" value="HAMP"/>
    <property type="match status" value="1"/>
</dbReference>
<dbReference type="CDD" id="cd16917">
    <property type="entry name" value="HATPase_UhpB-NarQ-NarX-like"/>
    <property type="match status" value="1"/>
</dbReference>
<dbReference type="CDD" id="cd22900">
    <property type="entry name" value="NarX_sensor"/>
    <property type="match status" value="1"/>
</dbReference>
<dbReference type="FunFam" id="1.20.5.1930:FF:000002">
    <property type="entry name" value="Sensor protein"/>
    <property type="match status" value="1"/>
</dbReference>
<dbReference type="FunFam" id="3.30.565.10:FF:000029">
    <property type="entry name" value="Sensor protein"/>
    <property type="match status" value="1"/>
</dbReference>
<dbReference type="Gene3D" id="1.20.5.1930">
    <property type="match status" value="1"/>
</dbReference>
<dbReference type="Gene3D" id="6.10.340.10">
    <property type="match status" value="1"/>
</dbReference>
<dbReference type="Gene3D" id="1.20.120.960">
    <property type="entry name" value="Histidine kinase NarX, sensor domain"/>
    <property type="match status" value="1"/>
</dbReference>
<dbReference type="Gene3D" id="3.30.565.10">
    <property type="entry name" value="Histidine kinase-like ATPase, C-terminal domain"/>
    <property type="match status" value="1"/>
</dbReference>
<dbReference type="InterPro" id="IPR003660">
    <property type="entry name" value="HAMP_dom"/>
</dbReference>
<dbReference type="InterPro" id="IPR036890">
    <property type="entry name" value="HATPase_C_sf"/>
</dbReference>
<dbReference type="InterPro" id="IPR005467">
    <property type="entry name" value="His_kinase_dom"/>
</dbReference>
<dbReference type="InterPro" id="IPR029095">
    <property type="entry name" value="NarX-like_N"/>
</dbReference>
<dbReference type="InterPro" id="IPR042295">
    <property type="entry name" value="NarX-like_N_sf"/>
</dbReference>
<dbReference type="InterPro" id="IPR050482">
    <property type="entry name" value="Sensor_HK_TwoCompSys"/>
</dbReference>
<dbReference type="InterPro" id="IPR016380">
    <property type="entry name" value="Sig_transdc_His_kin_NarX/NarQ"/>
</dbReference>
<dbReference type="InterPro" id="IPR011712">
    <property type="entry name" value="Sig_transdc_His_kin_sub3_dim/P"/>
</dbReference>
<dbReference type="NCBIfam" id="NF007896">
    <property type="entry name" value="PRK10600.1"/>
    <property type="match status" value="1"/>
</dbReference>
<dbReference type="PANTHER" id="PTHR24421">
    <property type="entry name" value="NITRATE/NITRITE SENSOR PROTEIN NARX-RELATED"/>
    <property type="match status" value="1"/>
</dbReference>
<dbReference type="PANTHER" id="PTHR24421:SF51">
    <property type="entry name" value="NITRATE_NITRITE SENSOR PROTEIN NARX"/>
    <property type="match status" value="1"/>
</dbReference>
<dbReference type="Pfam" id="PF00672">
    <property type="entry name" value="HAMP"/>
    <property type="match status" value="1"/>
</dbReference>
<dbReference type="Pfam" id="PF02518">
    <property type="entry name" value="HATPase_c"/>
    <property type="match status" value="1"/>
</dbReference>
<dbReference type="Pfam" id="PF07730">
    <property type="entry name" value="HisKA_3"/>
    <property type="match status" value="1"/>
</dbReference>
<dbReference type="Pfam" id="PF13675">
    <property type="entry name" value="PilJ"/>
    <property type="match status" value="1"/>
</dbReference>
<dbReference type="PIRSF" id="PIRSF003167">
    <property type="entry name" value="STHK_NarX/NarQ"/>
    <property type="match status" value="1"/>
</dbReference>
<dbReference type="SMART" id="SM00304">
    <property type="entry name" value="HAMP"/>
    <property type="match status" value="1"/>
</dbReference>
<dbReference type="SMART" id="SM00387">
    <property type="entry name" value="HATPase_c"/>
    <property type="match status" value="1"/>
</dbReference>
<dbReference type="SUPFAM" id="SSF55874">
    <property type="entry name" value="ATPase domain of HSP90 chaperone/DNA topoisomerase II/histidine kinase"/>
    <property type="match status" value="1"/>
</dbReference>
<dbReference type="SUPFAM" id="SSF158472">
    <property type="entry name" value="HAMP domain-like"/>
    <property type="match status" value="1"/>
</dbReference>
<dbReference type="PROSITE" id="PS50885">
    <property type="entry name" value="HAMP"/>
    <property type="match status" value="1"/>
</dbReference>
<dbReference type="PROSITE" id="PS50109">
    <property type="entry name" value="HIS_KIN"/>
    <property type="match status" value="1"/>
</dbReference>